<accession>Q51669</accession>
<reference key="1">
    <citation type="journal article" date="1996" name="J. Bacteriol.">
        <title>S-formylglutathione hydrolase of Paracoccus denitrificans is homologous to human esterase D: a universal pathway for formaldehyde detoxification?</title>
        <authorList>
            <person name="Harms N."/>
            <person name="Ras J."/>
            <person name="Reijnders W.N.M."/>
            <person name="van Spanning R.J.M."/>
            <person name="Stouthamer A.H."/>
        </authorList>
    </citation>
    <scope>NUCLEOTIDE SEQUENCE [GENOMIC DNA]</scope>
</reference>
<reference key="2">
    <citation type="journal article" date="2002" name="J. Biol. Chem.">
        <title>A glutathione-dependent formaldehyde-activating enzyme (Gfa) from Paracoccus denitrificans detected and purified via two-dimensional proton exchange NMR spectroscopy.</title>
        <authorList>
            <person name="Goenrich M."/>
            <person name="Bartoschek S."/>
            <person name="Hagemeier C.H."/>
            <person name="Griesinger C."/>
            <person name="Vorholt J.A."/>
        </authorList>
    </citation>
    <scope>PROTEIN SEQUENCE OF 2-16</scope>
    <scope>FUNCTION</scope>
</reference>
<reference key="3">
    <citation type="journal article" date="2005" name="J. Biol. Chem.">
        <title>A dynamic zinc redox switch.</title>
        <authorList>
            <person name="Neculai A.M."/>
            <person name="Neculai D."/>
            <person name="Griesinger C."/>
            <person name="Vorholt J.A."/>
            <person name="Becker S."/>
        </authorList>
    </citation>
    <scope>X-RAY CRYSTALLOGRAPHY (2.35 ANGSTROMS) IN COMPLEX WITH GLUTATHIONE</scope>
</reference>
<organism>
    <name type="scientific">Paracoccus denitrificans</name>
    <dbReference type="NCBI Taxonomy" id="266"/>
    <lineage>
        <taxon>Bacteria</taxon>
        <taxon>Pseudomonadati</taxon>
        <taxon>Pseudomonadota</taxon>
        <taxon>Alphaproteobacteria</taxon>
        <taxon>Rhodobacterales</taxon>
        <taxon>Paracoccaceae</taxon>
        <taxon>Paracoccus</taxon>
    </lineage>
</organism>
<comment type="function">
    <text evidence="2">Catalyzes the condensation of formaldehyde and glutathione to S-hydroxymethylglutathione.</text>
</comment>
<comment type="catalytic activity">
    <reaction>
        <text>S-(hydroxymethyl)glutathione = glutathione + formaldehyde</text>
        <dbReference type="Rhea" id="RHEA:22488"/>
        <dbReference type="ChEBI" id="CHEBI:16842"/>
        <dbReference type="ChEBI" id="CHEBI:57925"/>
        <dbReference type="ChEBI" id="CHEBI:58758"/>
        <dbReference type="EC" id="4.4.1.22"/>
    </reaction>
</comment>
<comment type="cofactor">
    <cofactor evidence="1">
        <name>Zn(2+)</name>
        <dbReference type="ChEBI" id="CHEBI:29105"/>
    </cofactor>
    <text evidence="1">Binds 2 Zn(2+) ions per subunit.</text>
</comment>
<comment type="pathway">
    <text>One-carbon metabolism; formaldehyde degradation; formate from formaldehyde (glutathione route): step 1/3.</text>
</comment>
<comment type="subunit">
    <text evidence="3">Homodimer.</text>
</comment>
<comment type="similarity">
    <text evidence="4">Belongs to the Gfa family.</text>
</comment>
<protein>
    <recommendedName>
        <fullName>Glutathione-dependent formaldehyde-activating enzyme</fullName>
        <ecNumber>4.4.1.22</ecNumber>
    </recommendedName>
    <alternativeName>
        <fullName>S-(hydroxymethyl)glutathione synthase</fullName>
    </alternativeName>
</protein>
<dbReference type="EC" id="4.4.1.22"/>
<dbReference type="EMBL" id="U34346">
    <property type="protein sequence ID" value="AAC44550.1"/>
    <property type="molecule type" value="Genomic_DNA"/>
</dbReference>
<dbReference type="RefSeq" id="WP_011746365.1">
    <property type="nucleotide sequence ID" value="NZ_PPGA01000008.1"/>
</dbReference>
<dbReference type="PDB" id="1X6M">
    <property type="method" value="X-ray"/>
    <property type="resolution" value="2.35 A"/>
    <property type="chains" value="A/B/C/D=2-194"/>
</dbReference>
<dbReference type="PDB" id="1XA8">
    <property type="method" value="X-ray"/>
    <property type="resolution" value="2.40 A"/>
    <property type="chains" value="A/B/C/D=2-194"/>
</dbReference>
<dbReference type="PDBsum" id="1X6M"/>
<dbReference type="PDBsum" id="1XA8"/>
<dbReference type="SMR" id="Q51669"/>
<dbReference type="GeneID" id="93451246"/>
<dbReference type="OMA" id="ECGTHMY"/>
<dbReference type="BRENDA" id="4.4.1.22">
    <property type="organism ID" value="3341"/>
</dbReference>
<dbReference type="UniPathway" id="UPA00562">
    <property type="reaction ID" value="UER00621"/>
</dbReference>
<dbReference type="EvolutionaryTrace" id="Q51669"/>
<dbReference type="GO" id="GO:0051907">
    <property type="term" value="F:S-(hydroxymethyl)glutathione synthase activity"/>
    <property type="evidence" value="ECO:0007669"/>
    <property type="project" value="UniProtKB-UniRule"/>
</dbReference>
<dbReference type="GO" id="GO:0008270">
    <property type="term" value="F:zinc ion binding"/>
    <property type="evidence" value="ECO:0007669"/>
    <property type="project" value="UniProtKB-UniRule"/>
</dbReference>
<dbReference type="GO" id="GO:0046294">
    <property type="term" value="P:formaldehyde catabolic process"/>
    <property type="evidence" value="ECO:0007669"/>
    <property type="project" value="UniProtKB-UniRule"/>
</dbReference>
<dbReference type="Gene3D" id="3.90.1590.10">
    <property type="entry name" value="glutathione-dependent formaldehyde- activating enzyme (gfa)"/>
    <property type="match status" value="1"/>
</dbReference>
<dbReference type="HAMAP" id="MF_00723">
    <property type="entry name" value="Formald_GSH"/>
    <property type="match status" value="1"/>
</dbReference>
<dbReference type="InterPro" id="IPR006913">
    <property type="entry name" value="CENP-V/GFA"/>
</dbReference>
<dbReference type="InterPro" id="IPR014185">
    <property type="entry name" value="Formald_GSH"/>
</dbReference>
<dbReference type="InterPro" id="IPR011057">
    <property type="entry name" value="Mss4-like_sf"/>
</dbReference>
<dbReference type="NCBIfam" id="TIGR02820">
    <property type="entry name" value="formald_GSH"/>
    <property type="match status" value="1"/>
</dbReference>
<dbReference type="NCBIfam" id="NF003829">
    <property type="entry name" value="PRK05417.1"/>
    <property type="match status" value="1"/>
</dbReference>
<dbReference type="PANTHER" id="PTHR33337:SF40">
    <property type="entry name" value="CENP-V_GFA DOMAIN-CONTAINING PROTEIN-RELATED"/>
    <property type="match status" value="1"/>
</dbReference>
<dbReference type="PANTHER" id="PTHR33337">
    <property type="entry name" value="GFA DOMAIN-CONTAINING PROTEIN"/>
    <property type="match status" value="1"/>
</dbReference>
<dbReference type="Pfam" id="PF04828">
    <property type="entry name" value="GFA"/>
    <property type="match status" value="1"/>
</dbReference>
<dbReference type="PIRSF" id="PIRSF033318">
    <property type="entry name" value="Formald_GSH"/>
    <property type="match status" value="1"/>
</dbReference>
<dbReference type="SUPFAM" id="SSF51316">
    <property type="entry name" value="Mss4-like"/>
    <property type="match status" value="1"/>
</dbReference>
<dbReference type="PROSITE" id="PS51891">
    <property type="entry name" value="CENP_V_GFA"/>
    <property type="match status" value="1"/>
</dbReference>
<keyword id="KW-0002">3D-structure</keyword>
<keyword id="KW-0903">Direct protein sequencing</keyword>
<keyword id="KW-0456">Lyase</keyword>
<keyword id="KW-0479">Metal-binding</keyword>
<keyword id="KW-0862">Zinc</keyword>
<proteinExistence type="evidence at protein level"/>
<feature type="initiator methionine" description="Removed" evidence="2">
    <location>
        <position position="1"/>
    </location>
</feature>
<feature type="chain" id="PRO_0000220321" description="Glutathione-dependent formaldehyde-activating enzyme">
    <location>
        <begin position="2"/>
        <end position="194"/>
    </location>
</feature>
<feature type="domain" description="CENP-V/GFA" evidence="1">
    <location>
        <begin position="24"/>
        <end position="171"/>
    </location>
</feature>
<feature type="binding site" evidence="1">
    <location>
        <position position="31"/>
    </location>
    <ligand>
        <name>Zn(2+)</name>
        <dbReference type="ChEBI" id="CHEBI:29105"/>
        <label>1</label>
        <note>structural</note>
    </ligand>
</feature>
<feature type="binding site" evidence="1">
    <location>
        <position position="33"/>
    </location>
    <ligand>
        <name>Zn(2+)</name>
        <dbReference type="ChEBI" id="CHEBI:29105"/>
        <label>1</label>
        <note>structural</note>
    </ligand>
</feature>
<feature type="binding site" evidence="1">
    <location>
        <position position="52"/>
    </location>
    <ligand>
        <name>Zn(2+)</name>
        <dbReference type="ChEBI" id="CHEBI:29105"/>
        <label>2</label>
        <note>catalytic</note>
    </ligand>
</feature>
<feature type="binding site" evidence="1">
    <location>
        <position position="54"/>
    </location>
    <ligand>
        <name>Zn(2+)</name>
        <dbReference type="ChEBI" id="CHEBI:29105"/>
        <label>2</label>
        <note>catalytic</note>
    </ligand>
</feature>
<feature type="binding site" evidence="1">
    <location>
        <position position="57"/>
    </location>
    <ligand>
        <name>Zn(2+)</name>
        <dbReference type="ChEBI" id="CHEBI:29105"/>
        <label>2</label>
        <note>catalytic</note>
    </ligand>
</feature>
<feature type="binding site" evidence="1">
    <location>
        <position position="99"/>
    </location>
    <ligand>
        <name>Zn(2+)</name>
        <dbReference type="ChEBI" id="CHEBI:29105"/>
        <label>1</label>
        <note>structural</note>
    </ligand>
</feature>
<feature type="binding site" evidence="1">
    <location>
        <position position="102"/>
    </location>
    <ligand>
        <name>Zn(2+)</name>
        <dbReference type="ChEBI" id="CHEBI:29105"/>
        <label>1</label>
        <note>structural</note>
    </ligand>
</feature>
<feature type="helix" evidence="5">
    <location>
        <begin position="11"/>
        <end position="14"/>
    </location>
</feature>
<feature type="strand" evidence="5">
    <location>
        <begin position="27"/>
        <end position="30"/>
    </location>
</feature>
<feature type="strand" evidence="5">
    <location>
        <begin position="34"/>
        <end position="36"/>
    </location>
</feature>
<feature type="strand" evidence="5">
    <location>
        <begin position="39"/>
        <end position="42"/>
    </location>
</feature>
<feature type="strand" evidence="5">
    <location>
        <begin position="47"/>
        <end position="52"/>
    </location>
</feature>
<feature type="strand" evidence="5">
    <location>
        <begin position="55"/>
        <end position="57"/>
    </location>
</feature>
<feature type="strand" evidence="5">
    <location>
        <begin position="64"/>
        <end position="72"/>
    </location>
</feature>
<feature type="helix" evidence="5">
    <location>
        <begin position="73"/>
        <end position="75"/>
    </location>
</feature>
<feature type="strand" evidence="5">
    <location>
        <begin position="76"/>
        <end position="80"/>
    </location>
</feature>
<feature type="helix" evidence="5">
    <location>
        <begin position="82"/>
        <end position="84"/>
    </location>
</feature>
<feature type="strand" evidence="5">
    <location>
        <begin position="85"/>
        <end position="88"/>
    </location>
</feature>
<feature type="strand" evidence="5">
    <location>
        <begin position="92"/>
        <end position="99"/>
    </location>
</feature>
<feature type="turn" evidence="5">
    <location>
        <begin position="100"/>
        <end position="102"/>
    </location>
</feature>
<feature type="strand" evidence="5">
    <location>
        <begin position="105"/>
        <end position="110"/>
    </location>
</feature>
<feature type="turn" evidence="5">
    <location>
        <begin position="116"/>
        <end position="119"/>
    </location>
</feature>
<feature type="strand" evidence="5">
    <location>
        <begin position="120"/>
        <end position="123"/>
    </location>
</feature>
<feature type="helix" evidence="5">
    <location>
        <begin position="125"/>
        <end position="127"/>
    </location>
</feature>
<feature type="strand" evidence="5">
    <location>
        <begin position="138"/>
        <end position="141"/>
    </location>
</feature>
<feature type="helix" evidence="5">
    <location>
        <begin position="142"/>
        <end position="148"/>
    </location>
</feature>
<feature type="helix" evidence="5">
    <location>
        <begin position="152"/>
        <end position="154"/>
    </location>
</feature>
<feature type="helix" evidence="5">
    <location>
        <begin position="155"/>
        <end position="164"/>
    </location>
</feature>
<feature type="strand" evidence="5">
    <location>
        <begin position="171"/>
        <end position="173"/>
    </location>
</feature>
<feature type="helix" evidence="5">
    <location>
        <begin position="175"/>
        <end position="189"/>
    </location>
</feature>
<feature type="strand" evidence="5">
    <location>
        <begin position="190"/>
        <end position="192"/>
    </location>
</feature>
<evidence type="ECO:0000255" key="1">
    <source>
        <dbReference type="PROSITE-ProRule" id="PRU01239"/>
    </source>
</evidence>
<evidence type="ECO:0000269" key="2">
    <source>
    </source>
</evidence>
<evidence type="ECO:0000269" key="3">
    <source>
    </source>
</evidence>
<evidence type="ECO:0000305" key="4"/>
<evidence type="ECO:0007829" key="5">
    <source>
        <dbReference type="PDB" id="1X6M"/>
    </source>
</evidence>
<name>GFA_PARDE</name>
<gene>
    <name type="primary">gfa</name>
</gene>
<sequence length="194" mass="20967">MVDTSGVKIHPAVDNGIKPAQPGFAGGTLHCKCSTNPVRVAVRAQTAHNHVCGCTKCWKPEGAIFSQVAVVGRDALEVLEGAEKLEIVNAEAPIQRHRCRDCGVHMYGRIENRDHPFYGLDFVHTELSDEDGWSAPEFAAFVSSIIESGVDPSRMEAIRARLRELGLEPYDALSPPLMDAIATHIAKRSGALAA</sequence>